<gene>
    <name type="primary">grk</name>
    <name type="ORF">CG17610</name>
</gene>
<proteinExistence type="evidence at protein level"/>
<organism>
    <name type="scientific">Drosophila melanogaster</name>
    <name type="common">Fruit fly</name>
    <dbReference type="NCBI Taxonomy" id="7227"/>
    <lineage>
        <taxon>Eukaryota</taxon>
        <taxon>Metazoa</taxon>
        <taxon>Ecdysozoa</taxon>
        <taxon>Arthropoda</taxon>
        <taxon>Hexapoda</taxon>
        <taxon>Insecta</taxon>
        <taxon>Pterygota</taxon>
        <taxon>Neoptera</taxon>
        <taxon>Endopterygota</taxon>
        <taxon>Diptera</taxon>
        <taxon>Brachycera</taxon>
        <taxon>Muscomorpha</taxon>
        <taxon>Ephydroidea</taxon>
        <taxon>Drosophilidae</taxon>
        <taxon>Drosophila</taxon>
        <taxon>Sophophora</taxon>
    </lineage>
</organism>
<protein>
    <recommendedName>
        <fullName>Protein gurken</fullName>
    </recommendedName>
</protein>
<name>GRK_DROME</name>
<feature type="signal peptide" evidence="1">
    <location>
        <begin position="1"/>
        <end position="26"/>
    </location>
</feature>
<feature type="chain" id="PRO_0000007607" description="Protein gurken">
    <location>
        <begin position="27"/>
        <end position="295"/>
    </location>
</feature>
<feature type="topological domain" description="Extracellular" evidence="1">
    <location>
        <begin position="27"/>
        <end position="247"/>
    </location>
</feature>
<feature type="transmembrane region" description="Helical" evidence="1">
    <location>
        <begin position="248"/>
        <end position="268"/>
    </location>
</feature>
<feature type="topological domain" description="Cytoplasmic" evidence="1">
    <location>
        <begin position="269"/>
        <end position="295"/>
    </location>
</feature>
<feature type="domain" description="EGF-like" evidence="2">
    <location>
        <begin position="179"/>
        <end position="224"/>
    </location>
</feature>
<feature type="region of interest" description="Disordered" evidence="3">
    <location>
        <begin position="78"/>
        <end position="111"/>
    </location>
</feature>
<feature type="region of interest" description="Disordered" evidence="3">
    <location>
        <begin position="124"/>
        <end position="175"/>
    </location>
</feature>
<feature type="region of interest" description="Interaction with cni">
    <location>
        <begin position="215"/>
        <end position="245"/>
    </location>
</feature>
<feature type="compositionally biased region" description="Polar residues" evidence="3">
    <location>
        <begin position="124"/>
        <end position="139"/>
    </location>
</feature>
<feature type="compositionally biased region" description="Low complexity" evidence="3">
    <location>
        <begin position="140"/>
        <end position="152"/>
    </location>
</feature>
<feature type="compositionally biased region" description="Low complexity" evidence="3">
    <location>
        <begin position="159"/>
        <end position="171"/>
    </location>
</feature>
<feature type="glycosylation site" description="N-linked (GlcNAc...) asparagine" evidence="1">
    <location>
        <position position="188"/>
    </location>
</feature>
<feature type="glycosylation site" description="N-linked (GlcNAc...) asparagine" evidence="1">
    <location>
        <position position="205"/>
    </location>
</feature>
<feature type="disulfide bond" evidence="2">
    <location>
        <begin position="183"/>
        <end position="198"/>
    </location>
</feature>
<feature type="disulfide bond" evidence="2">
    <location>
        <begin position="192"/>
        <end position="212"/>
    </location>
</feature>
<feature type="disulfide bond" evidence="2">
    <location>
        <begin position="214"/>
        <end position="223"/>
    </location>
</feature>
<feature type="strand" evidence="7">
    <location>
        <begin position="244"/>
        <end position="246"/>
    </location>
</feature>
<evidence type="ECO:0000255" key="1"/>
<evidence type="ECO:0000255" key="2">
    <source>
        <dbReference type="PROSITE-ProRule" id="PRU00076"/>
    </source>
</evidence>
<evidence type="ECO:0000256" key="3">
    <source>
        <dbReference type="SAM" id="MobiDB-lite"/>
    </source>
</evidence>
<evidence type="ECO:0000269" key="4">
    <source>
    </source>
</evidence>
<evidence type="ECO:0000269" key="5">
    <source>
    </source>
</evidence>
<evidence type="ECO:0000305" key="6"/>
<evidence type="ECO:0007829" key="7">
    <source>
        <dbReference type="PDB" id="6PJU"/>
    </source>
</evidence>
<sequence>MMQIPFTRIFKVIFVLSTIVAVTDCCSSRILLLREHTLKIVQHQHSHMHEHAHELQQQIQETAVELLNRLELQRKQLEASAQEEADQLHPDTDPNPDSGGQLPNADDSIAADPEQDGIILGSSTDTWLASESSTPITDSETVTTPETVTHTGEPPPDPSSSSTPDSTTPSPNDKETEIQMLPCSEAYNTSFCLNGGHCFQHPMVNNTVFHSCLCVNDYDGERCAYKSWNGDYIYSPPTAQRKVRMAHIVFSFPVLLMLSSLYVLFAAVFMLRNVPDYRRKQQQLHLHKQRFFVRC</sequence>
<comment type="function">
    <text evidence="4">Critical for defining the anterior-posterior and dorsal-ventral axes of the egg. May signal directly to dorsal follicle cells through the receptor torpedo (top). During oogenesis this signaling pathway instructs follicle cells to follow a dorsal pathway of development rather than the default ventral pathway.</text>
</comment>
<comment type="subunit">
    <text evidence="5">Interacts with cni.</text>
</comment>
<comment type="subcellular location">
    <subcellularLocation>
        <location evidence="5">Cell membrane</location>
        <topology evidence="5">Single-pass type I membrane protein</topology>
    </subcellularLocation>
    <text>Associates with the membranous cortex of yolk granules. Transiently inserted into the cell membrane, and then reinternalized during yolk uptake. cni is required for its transport to the oocyte cell membrane.</text>
</comment>
<comment type="tissue specificity">
    <text evidence="4 5">Expressed in nurse cells and oocyte up to oogenesis stage 7. Specifically accumulates in dorsal anterior corner of the oocyte during stages 9/10, at later stages expression is seen as an anterior ring. In stage 10 ovaries, it is concentrated between the oocyte nucleus and the adjacent oolemma. During vitellogenesis stage it can be detected at the oocyte surface, especially on the microvilli. It is also found at the microvilli covering the apical surface of the follicular epithelium and within follicle cells.</text>
</comment>
<comment type="sequence caution" evidence="6">
    <conflict type="erroneous initiation">
        <sequence resource="EMBL-CDS" id="AAA28598"/>
    </conflict>
    <text>Truncated N-terminus.</text>
</comment>
<comment type="sequence caution" evidence="6">
    <conflict type="erroneous initiation">
        <sequence resource="EMBL-CDS" id="AAF72000"/>
    </conflict>
    <text>Truncated N-terminus.</text>
</comment>
<reference key="1">
    <citation type="journal article" date="1993" name="Cell">
        <title>The Drosophila dorsoventral patterning gene gurken produces a dorsally localized RNA and encodes a TGF alpha-like protein.</title>
        <authorList>
            <person name="Neuman-Silberberg F.S."/>
            <person name="Schuepbach T."/>
        </authorList>
    </citation>
    <scope>NUCLEOTIDE SEQUENCE [MRNA]</scope>
    <source>
        <tissue>Ovary</tissue>
    </source>
</reference>
<reference key="2">
    <citation type="journal article" date="2000" name="Dev. Biol.">
        <title>Localization of gurken RNA in Drosophila oogenesis requires elements in the 5' and 3' regions of the transcript.</title>
        <authorList>
            <person name="Thio G.L."/>
            <person name="Ray R.P."/>
            <person name="Barcelo G."/>
            <person name="Schuepbach T."/>
        </authorList>
    </citation>
    <scope>NUCLEOTIDE SEQUENCE [GENOMIC DNA]</scope>
    <scope>FUNCTION</scope>
    <scope>TISSUE SPECIFICITY</scope>
    <source>
        <strain>Oregon-R</strain>
    </source>
</reference>
<reference key="3">
    <citation type="journal article" date="2000" name="Science">
        <title>The genome sequence of Drosophila melanogaster.</title>
        <authorList>
            <person name="Adams M.D."/>
            <person name="Celniker S.E."/>
            <person name="Holt R.A."/>
            <person name="Evans C.A."/>
            <person name="Gocayne J.D."/>
            <person name="Amanatides P.G."/>
            <person name="Scherer S.E."/>
            <person name="Li P.W."/>
            <person name="Hoskins R.A."/>
            <person name="Galle R.F."/>
            <person name="George R.A."/>
            <person name="Lewis S.E."/>
            <person name="Richards S."/>
            <person name="Ashburner M."/>
            <person name="Henderson S.N."/>
            <person name="Sutton G.G."/>
            <person name="Wortman J.R."/>
            <person name="Yandell M.D."/>
            <person name="Zhang Q."/>
            <person name="Chen L.X."/>
            <person name="Brandon R.C."/>
            <person name="Rogers Y.-H.C."/>
            <person name="Blazej R.G."/>
            <person name="Champe M."/>
            <person name="Pfeiffer B.D."/>
            <person name="Wan K.H."/>
            <person name="Doyle C."/>
            <person name="Baxter E.G."/>
            <person name="Helt G."/>
            <person name="Nelson C.R."/>
            <person name="Miklos G.L.G."/>
            <person name="Abril J.F."/>
            <person name="Agbayani A."/>
            <person name="An H.-J."/>
            <person name="Andrews-Pfannkoch C."/>
            <person name="Baldwin D."/>
            <person name="Ballew R.M."/>
            <person name="Basu A."/>
            <person name="Baxendale J."/>
            <person name="Bayraktaroglu L."/>
            <person name="Beasley E.M."/>
            <person name="Beeson K.Y."/>
            <person name="Benos P.V."/>
            <person name="Berman B.P."/>
            <person name="Bhandari D."/>
            <person name="Bolshakov S."/>
            <person name="Borkova D."/>
            <person name="Botchan M.R."/>
            <person name="Bouck J."/>
            <person name="Brokstein P."/>
            <person name="Brottier P."/>
            <person name="Burtis K.C."/>
            <person name="Busam D.A."/>
            <person name="Butler H."/>
            <person name="Cadieu E."/>
            <person name="Center A."/>
            <person name="Chandra I."/>
            <person name="Cherry J.M."/>
            <person name="Cawley S."/>
            <person name="Dahlke C."/>
            <person name="Davenport L.B."/>
            <person name="Davies P."/>
            <person name="de Pablos B."/>
            <person name="Delcher A."/>
            <person name="Deng Z."/>
            <person name="Mays A.D."/>
            <person name="Dew I."/>
            <person name="Dietz S.M."/>
            <person name="Dodson K."/>
            <person name="Doup L.E."/>
            <person name="Downes M."/>
            <person name="Dugan-Rocha S."/>
            <person name="Dunkov B.C."/>
            <person name="Dunn P."/>
            <person name="Durbin K.J."/>
            <person name="Evangelista C.C."/>
            <person name="Ferraz C."/>
            <person name="Ferriera S."/>
            <person name="Fleischmann W."/>
            <person name="Fosler C."/>
            <person name="Gabrielian A.E."/>
            <person name="Garg N.S."/>
            <person name="Gelbart W.M."/>
            <person name="Glasser K."/>
            <person name="Glodek A."/>
            <person name="Gong F."/>
            <person name="Gorrell J.H."/>
            <person name="Gu Z."/>
            <person name="Guan P."/>
            <person name="Harris M."/>
            <person name="Harris N.L."/>
            <person name="Harvey D.A."/>
            <person name="Heiman T.J."/>
            <person name="Hernandez J.R."/>
            <person name="Houck J."/>
            <person name="Hostin D."/>
            <person name="Houston K.A."/>
            <person name="Howland T.J."/>
            <person name="Wei M.-H."/>
            <person name="Ibegwam C."/>
            <person name="Jalali M."/>
            <person name="Kalush F."/>
            <person name="Karpen G.H."/>
            <person name="Ke Z."/>
            <person name="Kennison J.A."/>
            <person name="Ketchum K.A."/>
            <person name="Kimmel B.E."/>
            <person name="Kodira C.D."/>
            <person name="Kraft C.L."/>
            <person name="Kravitz S."/>
            <person name="Kulp D."/>
            <person name="Lai Z."/>
            <person name="Lasko P."/>
            <person name="Lei Y."/>
            <person name="Levitsky A.A."/>
            <person name="Li J.H."/>
            <person name="Li Z."/>
            <person name="Liang Y."/>
            <person name="Lin X."/>
            <person name="Liu X."/>
            <person name="Mattei B."/>
            <person name="McIntosh T.C."/>
            <person name="McLeod M.P."/>
            <person name="McPherson D."/>
            <person name="Merkulov G."/>
            <person name="Milshina N.V."/>
            <person name="Mobarry C."/>
            <person name="Morris J."/>
            <person name="Moshrefi A."/>
            <person name="Mount S.M."/>
            <person name="Moy M."/>
            <person name="Murphy B."/>
            <person name="Murphy L."/>
            <person name="Muzny D.M."/>
            <person name="Nelson D.L."/>
            <person name="Nelson D.R."/>
            <person name="Nelson K.A."/>
            <person name="Nixon K."/>
            <person name="Nusskern D.R."/>
            <person name="Pacleb J.M."/>
            <person name="Palazzolo M."/>
            <person name="Pittman G.S."/>
            <person name="Pan S."/>
            <person name="Pollard J."/>
            <person name="Puri V."/>
            <person name="Reese M.G."/>
            <person name="Reinert K."/>
            <person name="Remington K."/>
            <person name="Saunders R.D.C."/>
            <person name="Scheeler F."/>
            <person name="Shen H."/>
            <person name="Shue B.C."/>
            <person name="Siden-Kiamos I."/>
            <person name="Simpson M."/>
            <person name="Skupski M.P."/>
            <person name="Smith T.J."/>
            <person name="Spier E."/>
            <person name="Spradling A.C."/>
            <person name="Stapleton M."/>
            <person name="Strong R."/>
            <person name="Sun E."/>
            <person name="Svirskas R."/>
            <person name="Tector C."/>
            <person name="Turner R."/>
            <person name="Venter E."/>
            <person name="Wang A.H."/>
            <person name="Wang X."/>
            <person name="Wang Z.-Y."/>
            <person name="Wassarman D.A."/>
            <person name="Weinstock G.M."/>
            <person name="Weissenbach J."/>
            <person name="Williams S.M."/>
            <person name="Woodage T."/>
            <person name="Worley K.C."/>
            <person name="Wu D."/>
            <person name="Yang S."/>
            <person name="Yao Q.A."/>
            <person name="Ye J."/>
            <person name="Yeh R.-F."/>
            <person name="Zaveri J.S."/>
            <person name="Zhan M."/>
            <person name="Zhang G."/>
            <person name="Zhao Q."/>
            <person name="Zheng L."/>
            <person name="Zheng X.H."/>
            <person name="Zhong F.N."/>
            <person name="Zhong W."/>
            <person name="Zhou X."/>
            <person name="Zhu S.C."/>
            <person name="Zhu X."/>
            <person name="Smith H.O."/>
            <person name="Gibbs R.A."/>
            <person name="Myers E.W."/>
            <person name="Rubin G.M."/>
            <person name="Venter J.C."/>
        </authorList>
    </citation>
    <scope>NUCLEOTIDE SEQUENCE [LARGE SCALE GENOMIC DNA]</scope>
    <source>
        <strain>Berkeley</strain>
    </source>
</reference>
<reference key="4">
    <citation type="journal article" date="2002" name="Genome Biol.">
        <title>Annotation of the Drosophila melanogaster euchromatic genome: a systematic review.</title>
        <authorList>
            <person name="Misra S."/>
            <person name="Crosby M.A."/>
            <person name="Mungall C.J."/>
            <person name="Matthews B.B."/>
            <person name="Campbell K.S."/>
            <person name="Hradecky P."/>
            <person name="Huang Y."/>
            <person name="Kaminker J.S."/>
            <person name="Millburn G.H."/>
            <person name="Prochnik S.E."/>
            <person name="Smith C.D."/>
            <person name="Tupy J.L."/>
            <person name="Whitfield E.J."/>
            <person name="Bayraktaroglu L."/>
            <person name="Berman B.P."/>
            <person name="Bettencourt B.R."/>
            <person name="Celniker S.E."/>
            <person name="de Grey A.D.N.J."/>
            <person name="Drysdale R.A."/>
            <person name="Harris N.L."/>
            <person name="Richter J."/>
            <person name="Russo S."/>
            <person name="Schroeder A.J."/>
            <person name="Shu S.Q."/>
            <person name="Stapleton M."/>
            <person name="Yamada C."/>
            <person name="Ashburner M."/>
            <person name="Gelbart W.M."/>
            <person name="Rubin G.M."/>
            <person name="Lewis S.E."/>
        </authorList>
    </citation>
    <scope>GENOME REANNOTATION</scope>
    <source>
        <strain>Berkeley</strain>
    </source>
</reference>
<reference key="5">
    <citation type="journal article" date="2002" name="Genome Biol.">
        <title>A Drosophila full-length cDNA resource.</title>
        <authorList>
            <person name="Stapleton M."/>
            <person name="Carlson J.W."/>
            <person name="Brokstein P."/>
            <person name="Yu C."/>
            <person name="Champe M."/>
            <person name="George R.A."/>
            <person name="Guarin H."/>
            <person name="Kronmiller B."/>
            <person name="Pacleb J.M."/>
            <person name="Park S."/>
            <person name="Wan K.H."/>
            <person name="Rubin G.M."/>
            <person name="Celniker S.E."/>
        </authorList>
    </citation>
    <scope>NUCLEOTIDE SEQUENCE [LARGE SCALE MRNA]</scope>
    <source>
        <strain>Berkeley</strain>
        <tissue>Embryo</tissue>
    </source>
</reference>
<reference key="6">
    <citation type="journal article" date="2006" name="Development">
        <title>Drosophila Cornichon acts as cargo receptor for ER export of the TGFalpha-like growth factor Gurken.</title>
        <authorList>
            <person name="Boekel C."/>
            <person name="Dass S."/>
            <person name="Wilsch-Braeuninger M."/>
            <person name="Roth S."/>
        </authorList>
    </citation>
    <scope>SUBCELLULAR LOCATION</scope>
    <scope>TISSUE SPECIFICITY</scope>
    <scope>INTERACTION WITH CNI</scope>
</reference>
<keyword id="KW-0002">3D-structure</keyword>
<keyword id="KW-1003">Cell membrane</keyword>
<keyword id="KW-0217">Developmental protein</keyword>
<keyword id="KW-0221">Differentiation</keyword>
<keyword id="KW-1015">Disulfide bond</keyword>
<keyword id="KW-0245">EGF-like domain</keyword>
<keyword id="KW-0325">Glycoprotein</keyword>
<keyword id="KW-0472">Membrane</keyword>
<keyword id="KW-0896">Oogenesis</keyword>
<keyword id="KW-1185">Reference proteome</keyword>
<keyword id="KW-0732">Signal</keyword>
<keyword id="KW-0812">Transmembrane</keyword>
<keyword id="KW-1133">Transmembrane helix</keyword>
<accession>P42287</accession>
<accession>Q9VLL2</accession>
<dbReference type="EMBL" id="L22531">
    <property type="protein sequence ID" value="AAA28598.1"/>
    <property type="status" value="ALT_INIT"/>
    <property type="molecule type" value="mRNA"/>
</dbReference>
<dbReference type="EMBL" id="AF223394">
    <property type="protein sequence ID" value="AAF72000.1"/>
    <property type="status" value="ALT_INIT"/>
    <property type="molecule type" value="Genomic_DNA"/>
</dbReference>
<dbReference type="EMBL" id="AE014134">
    <property type="protein sequence ID" value="AAF52675.4"/>
    <property type="molecule type" value="Genomic_DNA"/>
</dbReference>
<dbReference type="EMBL" id="AY051814">
    <property type="protein sequence ID" value="AAK93238.1"/>
    <property type="molecule type" value="mRNA"/>
</dbReference>
<dbReference type="PIR" id="A48844">
    <property type="entry name" value="A48844"/>
</dbReference>
<dbReference type="RefSeq" id="NP_476568.2">
    <property type="nucleotide sequence ID" value="NM_057220.3"/>
</dbReference>
<dbReference type="PDB" id="5F5K">
    <property type="method" value="X-ray"/>
    <property type="resolution" value="2.40 A"/>
    <property type="chains" value="B=241-246"/>
</dbReference>
<dbReference type="PDB" id="6PJP">
    <property type="method" value="X-ray"/>
    <property type="resolution" value="2.45 A"/>
    <property type="chains" value="B=241-253"/>
</dbReference>
<dbReference type="PDB" id="6PJQ">
    <property type="method" value="X-ray"/>
    <property type="resolution" value="2.50 A"/>
    <property type="chains" value="B=241-253"/>
</dbReference>
<dbReference type="PDB" id="6PJR">
    <property type="method" value="X-ray"/>
    <property type="resolution" value="2.40 A"/>
    <property type="chains" value="B=241-253"/>
</dbReference>
<dbReference type="PDB" id="6PJU">
    <property type="method" value="X-ray"/>
    <property type="resolution" value="2.50 A"/>
    <property type="chains" value="B=241-253"/>
</dbReference>
<dbReference type="PDBsum" id="5F5K"/>
<dbReference type="PDBsum" id="6PJP"/>
<dbReference type="PDBsum" id="6PJQ"/>
<dbReference type="PDBsum" id="6PJR"/>
<dbReference type="PDBsum" id="6PJU"/>
<dbReference type="SMR" id="P42287"/>
<dbReference type="BioGRID" id="60293">
    <property type="interactions" value="63"/>
</dbReference>
<dbReference type="DIP" id="DIP-20922N"/>
<dbReference type="FunCoup" id="P42287">
    <property type="interactions" value="100"/>
</dbReference>
<dbReference type="IntAct" id="P42287">
    <property type="interactions" value="4"/>
</dbReference>
<dbReference type="STRING" id="7227.FBpp0079313"/>
<dbReference type="GlyCosmos" id="P42287">
    <property type="glycosylation" value="2 sites, No reported glycans"/>
</dbReference>
<dbReference type="GlyGen" id="P42287">
    <property type="glycosylation" value="2 sites"/>
</dbReference>
<dbReference type="PaxDb" id="7227-FBpp0079313"/>
<dbReference type="DNASU" id="34171"/>
<dbReference type="EnsemblMetazoa" id="FBtr0079708">
    <property type="protein sequence ID" value="FBpp0079313"/>
    <property type="gene ID" value="FBgn0001137"/>
</dbReference>
<dbReference type="GeneID" id="34171"/>
<dbReference type="KEGG" id="dme:Dmel_CG17610"/>
<dbReference type="UCSC" id="CG17610-RA">
    <property type="organism name" value="d. melanogaster"/>
</dbReference>
<dbReference type="AGR" id="FB:FBgn0001137"/>
<dbReference type="CTD" id="34171"/>
<dbReference type="FlyBase" id="FBgn0001137">
    <property type="gene designation" value="grk"/>
</dbReference>
<dbReference type="VEuPathDB" id="VectorBase:FBgn0001137"/>
<dbReference type="eggNOG" id="ENOG502QS97">
    <property type="taxonomic scope" value="Eukaryota"/>
</dbReference>
<dbReference type="GeneTree" id="ENSGT00520000062215"/>
<dbReference type="HOGENOM" id="CLU_880737_0_0_1"/>
<dbReference type="InParanoid" id="P42287"/>
<dbReference type="OMA" id="FSFPMLI"/>
<dbReference type="OrthoDB" id="6133584at2759"/>
<dbReference type="PhylomeDB" id="P42287"/>
<dbReference type="SignaLink" id="P42287"/>
<dbReference type="BioGRID-ORCS" id="34171">
    <property type="hits" value="0 hits in 1 CRISPR screen"/>
</dbReference>
<dbReference type="EvolutionaryTrace" id="P42287"/>
<dbReference type="GenomeRNAi" id="34171"/>
<dbReference type="PRO" id="PR:P42287"/>
<dbReference type="Proteomes" id="UP000000803">
    <property type="component" value="Chromosome 2L"/>
</dbReference>
<dbReference type="Bgee" id="FBgn0001137">
    <property type="expression patterns" value="Expressed in muscle cell in proboscis and 70 other cell types or tissues"/>
</dbReference>
<dbReference type="GO" id="GO:0005615">
    <property type="term" value="C:extracellular space"/>
    <property type="evidence" value="ECO:0000314"/>
    <property type="project" value="FlyBase"/>
</dbReference>
<dbReference type="GO" id="GO:0005886">
    <property type="term" value="C:plasma membrane"/>
    <property type="evidence" value="ECO:0000314"/>
    <property type="project" value="UniProtKB"/>
</dbReference>
<dbReference type="GO" id="GO:0005154">
    <property type="term" value="F:epidermal growth factor receptor binding"/>
    <property type="evidence" value="ECO:0000314"/>
    <property type="project" value="FlyBase"/>
</dbReference>
<dbReference type="GO" id="GO:0048018">
    <property type="term" value="F:receptor ligand activity"/>
    <property type="evidence" value="ECO:0000314"/>
    <property type="project" value="FlyBase"/>
</dbReference>
<dbReference type="GO" id="GO:0030714">
    <property type="term" value="P:anterior/posterior axis specification, follicular epithelium"/>
    <property type="evidence" value="ECO:0000304"/>
    <property type="project" value="FlyBase"/>
</dbReference>
<dbReference type="GO" id="GO:0009952">
    <property type="term" value="P:anterior/posterior pattern specification"/>
    <property type="evidence" value="ECO:0000304"/>
    <property type="project" value="FlyBase"/>
</dbReference>
<dbReference type="GO" id="GO:0007166">
    <property type="term" value="P:cell surface receptor signaling pathway"/>
    <property type="evidence" value="ECO:0000318"/>
    <property type="project" value="GO_Central"/>
</dbReference>
<dbReference type="GO" id="GO:0030381">
    <property type="term" value="P:chorion-containing eggshell pattern formation"/>
    <property type="evidence" value="ECO:0007001"/>
    <property type="project" value="FlyBase"/>
</dbReference>
<dbReference type="GO" id="GO:0048263">
    <property type="term" value="P:determination of dorsal identity"/>
    <property type="evidence" value="ECO:0000315"/>
    <property type="project" value="FlyBase"/>
</dbReference>
<dbReference type="GO" id="GO:0046843">
    <property type="term" value="P:dorsal appendage formation"/>
    <property type="evidence" value="ECO:0000315"/>
    <property type="project" value="FlyBase"/>
</dbReference>
<dbReference type="GO" id="GO:0008069">
    <property type="term" value="P:dorsal/ventral axis specification, ovarian follicular epithelium"/>
    <property type="evidence" value="ECO:0000304"/>
    <property type="project" value="FlyBase"/>
</dbReference>
<dbReference type="GO" id="GO:0007173">
    <property type="term" value="P:epidermal growth factor receptor signaling pathway"/>
    <property type="evidence" value="ECO:0000314"/>
    <property type="project" value="FlyBase"/>
</dbReference>
<dbReference type="GO" id="GO:0007474">
    <property type="term" value="P:imaginal disc-derived wing vein specification"/>
    <property type="evidence" value="ECO:0000315"/>
    <property type="project" value="FlyBase"/>
</dbReference>
<dbReference type="GO" id="GO:0008070">
    <property type="term" value="P:maternal determination of dorsal/ventral axis, ovarian follicular epithelium, germ-line encoded"/>
    <property type="evidence" value="ECO:0000315"/>
    <property type="project" value="FlyBase"/>
</dbReference>
<dbReference type="GO" id="GO:0007314">
    <property type="term" value="P:oocyte anterior/posterior axis specification"/>
    <property type="evidence" value="ECO:0000304"/>
    <property type="project" value="FlyBase"/>
</dbReference>
<dbReference type="GO" id="GO:0007310">
    <property type="term" value="P:oocyte dorsal/ventral axis specification"/>
    <property type="evidence" value="ECO:0000315"/>
    <property type="project" value="FlyBase"/>
</dbReference>
<dbReference type="GO" id="GO:0016325">
    <property type="term" value="P:oocyte microtubule cytoskeleton organization"/>
    <property type="evidence" value="ECO:0000315"/>
    <property type="project" value="FlyBase"/>
</dbReference>
<dbReference type="GO" id="GO:1903688">
    <property type="term" value="P:positive regulation of border follicle cell migration"/>
    <property type="evidence" value="ECO:0000315"/>
    <property type="project" value="FlyBase"/>
</dbReference>
<dbReference type="Gene3D" id="2.10.25.10">
    <property type="entry name" value="Laminin"/>
    <property type="match status" value="1"/>
</dbReference>
<dbReference type="InterPro" id="IPR000742">
    <property type="entry name" value="EGF-like_dom"/>
</dbReference>
<dbReference type="InterPro" id="IPR043403">
    <property type="entry name" value="Gurken/Spitz"/>
</dbReference>
<dbReference type="PANTHER" id="PTHR12332">
    <property type="entry name" value="KEREN-RELATED"/>
    <property type="match status" value="1"/>
</dbReference>
<dbReference type="PANTHER" id="PTHR12332:SF1">
    <property type="entry name" value="KEREN-RELATED"/>
    <property type="match status" value="1"/>
</dbReference>
<dbReference type="SUPFAM" id="SSF57196">
    <property type="entry name" value="EGF/Laminin"/>
    <property type="match status" value="1"/>
</dbReference>
<dbReference type="PROSITE" id="PS00022">
    <property type="entry name" value="EGF_1"/>
    <property type="match status" value="1"/>
</dbReference>
<dbReference type="PROSITE" id="PS50026">
    <property type="entry name" value="EGF_3"/>
    <property type="match status" value="1"/>
</dbReference>